<sequence length="631" mass="69063">MAPPGSSAVFLLALTITASVQALTPTHYLTKQDVERLKASLDRPFTDLESAFYSIVGLSSLGVQVPDVKKACTFIKSNLDPSNVDSLFYAAQSSQVLSGCEISVSNETKELLLAAVSEDSPIAQIYHAVAALSGFGLPLASNEALGALTARLGKEETVLATVQALQTASHLSQQADLRNIVEEIEDLVARLDELGGVYLQFEEGLELTALFVAATYKLMDHVGTEPSMKEDQVIQLMNTIFSKKNFESLSEAFSVASAAAALSQNRYHVPVVVVPEGSTSDTQEQAILRLQVSNVLSQPLAQAAVKLEHAKSAATRATVLQKTPFSLVGNVFELNFKNVKLSSGYYDFSVRVEGDSRYIANTVELRVKISTEVGITNVDLSTVDKDQSIAPKTTRVTYPAKAKGTFIADSHQNFALFFQLVDVNTGAELTPHQTFVRLHNQKTGQEVVFVAEPDNKNVYKFELDTSERKIEFDSASGTYTLYLIIGDATLKNPILWNVADVVIKFPEEEAPSTVLSQSLFTPKQEIQHLFREPEKRPPTVVSNTFTALILSPLLLLFALWIRIGANVSNFTFAPSTVIFHLGHAAMLGLMYIYWTQLNMFQTLKYLAVLGTVTFLAGNRMLAQHAVKRTAH</sequence>
<dbReference type="EMBL" id="AK004968">
    <property type="protein sequence ID" value="BAB23707.1"/>
    <property type="molecule type" value="mRNA"/>
</dbReference>
<dbReference type="EMBL" id="AK161624">
    <property type="protein sequence ID" value="BAE36498.1"/>
    <property type="molecule type" value="mRNA"/>
</dbReference>
<dbReference type="EMBL" id="AK166778">
    <property type="protein sequence ID" value="BAE39013.1"/>
    <property type="molecule type" value="mRNA"/>
</dbReference>
<dbReference type="EMBL" id="AL669828">
    <property type="status" value="NOT_ANNOTATED_CDS"/>
    <property type="molecule type" value="Genomic_DNA"/>
</dbReference>
<dbReference type="EMBL" id="BC010509">
    <property type="protein sequence ID" value="AAH10509.1"/>
    <property type="molecule type" value="mRNA"/>
</dbReference>
<dbReference type="EMBL" id="BC046806">
    <property type="protein sequence ID" value="AAH46806.1"/>
    <property type="molecule type" value="mRNA"/>
</dbReference>
<dbReference type="CCDS" id="CCDS16975.1"/>
<dbReference type="RefSeq" id="NP_062616.2">
    <property type="nucleotide sequence ID" value="NM_019642.4"/>
</dbReference>
<dbReference type="PDB" id="5J6G">
    <property type="method" value="X-ray"/>
    <property type="resolution" value="3.30 A"/>
    <property type="chains" value="E/F=373-380"/>
</dbReference>
<dbReference type="PDB" id="5J6H">
    <property type="method" value="X-ray"/>
    <property type="resolution" value="2.30 A"/>
    <property type="chains" value="F=373-380"/>
</dbReference>
<dbReference type="PDBsum" id="5J6G"/>
<dbReference type="PDBsum" id="5J6H"/>
<dbReference type="SMR" id="Q9DBG6"/>
<dbReference type="BioGRID" id="202990">
    <property type="interactions" value="10"/>
</dbReference>
<dbReference type="ComplexPortal" id="CPX-5821">
    <property type="entry name" value="Oligosaccharyltransferase complex A"/>
</dbReference>
<dbReference type="ComplexPortal" id="CPX-5822">
    <property type="entry name" value="Oligosaccharyltransferase complex B, MAGT1 variant"/>
</dbReference>
<dbReference type="ComplexPortal" id="CPX-8739">
    <property type="entry name" value="Oligosaccharyltransferase complex B, TUSC3 variant"/>
</dbReference>
<dbReference type="FunCoup" id="Q9DBG6">
    <property type="interactions" value="3446"/>
</dbReference>
<dbReference type="IntAct" id="Q9DBG6">
    <property type="interactions" value="8"/>
</dbReference>
<dbReference type="MINT" id="Q9DBG6"/>
<dbReference type="STRING" id="10090.ENSMUSP00000112081"/>
<dbReference type="GlyConnect" id="2263">
    <property type="glycosylation" value="3 N-Linked glycans (1 site)"/>
</dbReference>
<dbReference type="GlyCosmos" id="Q9DBG6">
    <property type="glycosylation" value="1 site, 3 glycans"/>
</dbReference>
<dbReference type="GlyGen" id="Q9DBG6">
    <property type="glycosylation" value="2 sites, 4 N-linked glycans (1 site), 1 O-linked glycan (1 site)"/>
</dbReference>
<dbReference type="iPTMnet" id="Q9DBG6"/>
<dbReference type="PhosphoSitePlus" id="Q9DBG6"/>
<dbReference type="SwissPalm" id="Q9DBG6"/>
<dbReference type="jPOST" id="Q9DBG6"/>
<dbReference type="PaxDb" id="10090-ENSMUSP00000112081"/>
<dbReference type="PeptideAtlas" id="Q9DBG6"/>
<dbReference type="ProteomicsDB" id="260935"/>
<dbReference type="Pumba" id="Q9DBG6"/>
<dbReference type="TopDownProteomics" id="Q9DBG6"/>
<dbReference type="Antibodypedia" id="1855">
    <property type="antibodies" value="198 antibodies from 27 providers"/>
</dbReference>
<dbReference type="DNASU" id="20014"/>
<dbReference type="Ensembl" id="ENSMUST00000116380.9">
    <property type="protein sequence ID" value="ENSMUSP00000112081.3"/>
    <property type="gene ID" value="ENSMUSG00000027642.16"/>
</dbReference>
<dbReference type="GeneID" id="20014"/>
<dbReference type="KEGG" id="mmu:20014"/>
<dbReference type="UCSC" id="uc008now.1">
    <property type="organism name" value="mouse"/>
</dbReference>
<dbReference type="AGR" id="MGI:98085"/>
<dbReference type="CTD" id="6185"/>
<dbReference type="MGI" id="MGI:98085">
    <property type="gene designation" value="Rpn2"/>
</dbReference>
<dbReference type="VEuPathDB" id="HostDB:ENSMUSG00000027642"/>
<dbReference type="eggNOG" id="KOG2447">
    <property type="taxonomic scope" value="Eukaryota"/>
</dbReference>
<dbReference type="GeneTree" id="ENSGT00390000002635"/>
<dbReference type="InParanoid" id="Q9DBG6"/>
<dbReference type="OMA" id="QEHETIY"/>
<dbReference type="PhylomeDB" id="Q9DBG6"/>
<dbReference type="TreeFam" id="TF106146"/>
<dbReference type="UniPathway" id="UPA00378"/>
<dbReference type="BioGRID-ORCS" id="20014">
    <property type="hits" value="20 hits in 83 CRISPR screens"/>
</dbReference>
<dbReference type="CD-CODE" id="CE726F99">
    <property type="entry name" value="Postsynaptic density"/>
</dbReference>
<dbReference type="ChiTaRS" id="Rpn2">
    <property type="organism name" value="mouse"/>
</dbReference>
<dbReference type="PRO" id="PR:Q9DBG6"/>
<dbReference type="Proteomes" id="UP000000589">
    <property type="component" value="Chromosome 2"/>
</dbReference>
<dbReference type="RNAct" id="Q9DBG6">
    <property type="molecule type" value="protein"/>
</dbReference>
<dbReference type="Bgee" id="ENSMUSG00000027642">
    <property type="expression patterns" value="Expressed in ileal epithelium and 271 other cell types or tissues"/>
</dbReference>
<dbReference type="ExpressionAtlas" id="Q9DBG6">
    <property type="expression patterns" value="baseline and differential"/>
</dbReference>
<dbReference type="GO" id="GO:0005789">
    <property type="term" value="C:endoplasmic reticulum membrane"/>
    <property type="evidence" value="ECO:0000303"/>
    <property type="project" value="ComplexPortal"/>
</dbReference>
<dbReference type="GO" id="GO:0016604">
    <property type="term" value="C:nuclear body"/>
    <property type="evidence" value="ECO:0007669"/>
    <property type="project" value="Ensembl"/>
</dbReference>
<dbReference type="GO" id="GO:0008250">
    <property type="term" value="C:oligosaccharyltransferase complex"/>
    <property type="evidence" value="ECO:0000303"/>
    <property type="project" value="ComplexPortal"/>
</dbReference>
<dbReference type="GO" id="GO:0160226">
    <property type="term" value="C:oligosaccharyltransferase complex A"/>
    <property type="evidence" value="ECO:0007669"/>
    <property type="project" value="Ensembl"/>
</dbReference>
<dbReference type="GO" id="GO:0160227">
    <property type="term" value="C:oligosaccharyltransferase complex B"/>
    <property type="evidence" value="ECO:0007669"/>
    <property type="project" value="Ensembl"/>
</dbReference>
<dbReference type="GO" id="GO:0006487">
    <property type="term" value="P:protein N-linked glycosylation"/>
    <property type="evidence" value="ECO:0000315"/>
    <property type="project" value="MGI"/>
</dbReference>
<dbReference type="InterPro" id="IPR055375">
    <property type="entry name" value="Ribophorin_II_2nd"/>
</dbReference>
<dbReference type="InterPro" id="IPR055374">
    <property type="entry name" value="Ribophorin_II_3rd"/>
</dbReference>
<dbReference type="InterPro" id="IPR056790">
    <property type="entry name" value="Ribophorin_II_C"/>
</dbReference>
<dbReference type="InterPro" id="IPR055373">
    <property type="entry name" value="Ribophorin_II_N"/>
</dbReference>
<dbReference type="InterPro" id="IPR008814">
    <property type="entry name" value="Swp1"/>
</dbReference>
<dbReference type="PANTHER" id="PTHR12640:SF0">
    <property type="entry name" value="DOLICHYL-DIPHOSPHOOLIGOSACCHARIDE--PROTEIN GLYCOSYLTRANSFERASE SUBUNIT 2"/>
    <property type="match status" value="1"/>
</dbReference>
<dbReference type="PANTHER" id="PTHR12640">
    <property type="entry name" value="RIBOPHORIN II"/>
    <property type="match status" value="1"/>
</dbReference>
<dbReference type="Pfam" id="PF05817">
    <property type="entry name" value="Ribophorin_II"/>
    <property type="match status" value="1"/>
</dbReference>
<dbReference type="Pfam" id="PF23861">
    <property type="entry name" value="Ribophorin_II_2nd"/>
    <property type="match status" value="1"/>
</dbReference>
<dbReference type="Pfam" id="PF23860">
    <property type="entry name" value="Ribophorin_II_3rd"/>
    <property type="match status" value="1"/>
</dbReference>
<dbReference type="Pfam" id="PF25147">
    <property type="entry name" value="Ribophorin_II_C"/>
    <property type="match status" value="1"/>
</dbReference>
<reference key="1">
    <citation type="journal article" date="2005" name="Science">
        <title>The transcriptional landscape of the mammalian genome.</title>
        <authorList>
            <person name="Carninci P."/>
            <person name="Kasukawa T."/>
            <person name="Katayama S."/>
            <person name="Gough J."/>
            <person name="Frith M.C."/>
            <person name="Maeda N."/>
            <person name="Oyama R."/>
            <person name="Ravasi T."/>
            <person name="Lenhard B."/>
            <person name="Wells C."/>
            <person name="Kodzius R."/>
            <person name="Shimokawa K."/>
            <person name="Bajic V.B."/>
            <person name="Brenner S.E."/>
            <person name="Batalov S."/>
            <person name="Forrest A.R."/>
            <person name="Zavolan M."/>
            <person name="Davis M.J."/>
            <person name="Wilming L.G."/>
            <person name="Aidinis V."/>
            <person name="Allen J.E."/>
            <person name="Ambesi-Impiombato A."/>
            <person name="Apweiler R."/>
            <person name="Aturaliya R.N."/>
            <person name="Bailey T.L."/>
            <person name="Bansal M."/>
            <person name="Baxter L."/>
            <person name="Beisel K.W."/>
            <person name="Bersano T."/>
            <person name="Bono H."/>
            <person name="Chalk A.M."/>
            <person name="Chiu K.P."/>
            <person name="Choudhary V."/>
            <person name="Christoffels A."/>
            <person name="Clutterbuck D.R."/>
            <person name="Crowe M.L."/>
            <person name="Dalla E."/>
            <person name="Dalrymple B.P."/>
            <person name="de Bono B."/>
            <person name="Della Gatta G."/>
            <person name="di Bernardo D."/>
            <person name="Down T."/>
            <person name="Engstrom P."/>
            <person name="Fagiolini M."/>
            <person name="Faulkner G."/>
            <person name="Fletcher C.F."/>
            <person name="Fukushima T."/>
            <person name="Furuno M."/>
            <person name="Futaki S."/>
            <person name="Gariboldi M."/>
            <person name="Georgii-Hemming P."/>
            <person name="Gingeras T.R."/>
            <person name="Gojobori T."/>
            <person name="Green R.E."/>
            <person name="Gustincich S."/>
            <person name="Harbers M."/>
            <person name="Hayashi Y."/>
            <person name="Hensch T.K."/>
            <person name="Hirokawa N."/>
            <person name="Hill D."/>
            <person name="Huminiecki L."/>
            <person name="Iacono M."/>
            <person name="Ikeo K."/>
            <person name="Iwama A."/>
            <person name="Ishikawa T."/>
            <person name="Jakt M."/>
            <person name="Kanapin A."/>
            <person name="Katoh M."/>
            <person name="Kawasawa Y."/>
            <person name="Kelso J."/>
            <person name="Kitamura H."/>
            <person name="Kitano H."/>
            <person name="Kollias G."/>
            <person name="Krishnan S.P."/>
            <person name="Kruger A."/>
            <person name="Kummerfeld S.K."/>
            <person name="Kurochkin I.V."/>
            <person name="Lareau L.F."/>
            <person name="Lazarevic D."/>
            <person name="Lipovich L."/>
            <person name="Liu J."/>
            <person name="Liuni S."/>
            <person name="McWilliam S."/>
            <person name="Madan Babu M."/>
            <person name="Madera M."/>
            <person name="Marchionni L."/>
            <person name="Matsuda H."/>
            <person name="Matsuzawa S."/>
            <person name="Miki H."/>
            <person name="Mignone F."/>
            <person name="Miyake S."/>
            <person name="Morris K."/>
            <person name="Mottagui-Tabar S."/>
            <person name="Mulder N."/>
            <person name="Nakano N."/>
            <person name="Nakauchi H."/>
            <person name="Ng P."/>
            <person name="Nilsson R."/>
            <person name="Nishiguchi S."/>
            <person name="Nishikawa S."/>
            <person name="Nori F."/>
            <person name="Ohara O."/>
            <person name="Okazaki Y."/>
            <person name="Orlando V."/>
            <person name="Pang K.C."/>
            <person name="Pavan W.J."/>
            <person name="Pavesi G."/>
            <person name="Pesole G."/>
            <person name="Petrovsky N."/>
            <person name="Piazza S."/>
            <person name="Reed J."/>
            <person name="Reid J.F."/>
            <person name="Ring B.Z."/>
            <person name="Ringwald M."/>
            <person name="Rost B."/>
            <person name="Ruan Y."/>
            <person name="Salzberg S.L."/>
            <person name="Sandelin A."/>
            <person name="Schneider C."/>
            <person name="Schoenbach C."/>
            <person name="Sekiguchi K."/>
            <person name="Semple C.A."/>
            <person name="Seno S."/>
            <person name="Sessa L."/>
            <person name="Sheng Y."/>
            <person name="Shibata Y."/>
            <person name="Shimada H."/>
            <person name="Shimada K."/>
            <person name="Silva D."/>
            <person name="Sinclair B."/>
            <person name="Sperling S."/>
            <person name="Stupka E."/>
            <person name="Sugiura K."/>
            <person name="Sultana R."/>
            <person name="Takenaka Y."/>
            <person name="Taki K."/>
            <person name="Tammoja K."/>
            <person name="Tan S.L."/>
            <person name="Tang S."/>
            <person name="Taylor M.S."/>
            <person name="Tegner J."/>
            <person name="Teichmann S.A."/>
            <person name="Ueda H.R."/>
            <person name="van Nimwegen E."/>
            <person name="Verardo R."/>
            <person name="Wei C.L."/>
            <person name="Yagi K."/>
            <person name="Yamanishi H."/>
            <person name="Zabarovsky E."/>
            <person name="Zhu S."/>
            <person name="Zimmer A."/>
            <person name="Hide W."/>
            <person name="Bult C."/>
            <person name="Grimmond S.M."/>
            <person name="Teasdale R.D."/>
            <person name="Liu E.T."/>
            <person name="Brusic V."/>
            <person name="Quackenbush J."/>
            <person name="Wahlestedt C."/>
            <person name="Mattick J.S."/>
            <person name="Hume D.A."/>
            <person name="Kai C."/>
            <person name="Sasaki D."/>
            <person name="Tomaru Y."/>
            <person name="Fukuda S."/>
            <person name="Kanamori-Katayama M."/>
            <person name="Suzuki M."/>
            <person name="Aoki J."/>
            <person name="Arakawa T."/>
            <person name="Iida J."/>
            <person name="Imamura K."/>
            <person name="Itoh M."/>
            <person name="Kato T."/>
            <person name="Kawaji H."/>
            <person name="Kawagashira N."/>
            <person name="Kawashima T."/>
            <person name="Kojima M."/>
            <person name="Kondo S."/>
            <person name="Konno H."/>
            <person name="Nakano K."/>
            <person name="Ninomiya N."/>
            <person name="Nishio T."/>
            <person name="Okada M."/>
            <person name="Plessy C."/>
            <person name="Shibata K."/>
            <person name="Shiraki T."/>
            <person name="Suzuki S."/>
            <person name="Tagami M."/>
            <person name="Waki K."/>
            <person name="Watahiki A."/>
            <person name="Okamura-Oho Y."/>
            <person name="Suzuki H."/>
            <person name="Kawai J."/>
            <person name="Hayashizaki Y."/>
        </authorList>
    </citation>
    <scope>NUCLEOTIDE SEQUENCE [LARGE SCALE MRNA]</scope>
    <source>
        <strain>C57BL/6J</strain>
        <tissue>Liver</tissue>
    </source>
</reference>
<reference key="2">
    <citation type="journal article" date="2009" name="PLoS Biol.">
        <title>Lineage-specific biology revealed by a finished genome assembly of the mouse.</title>
        <authorList>
            <person name="Church D.M."/>
            <person name="Goodstadt L."/>
            <person name="Hillier L.W."/>
            <person name="Zody M.C."/>
            <person name="Goldstein S."/>
            <person name="She X."/>
            <person name="Bult C.J."/>
            <person name="Agarwala R."/>
            <person name="Cherry J.L."/>
            <person name="DiCuccio M."/>
            <person name="Hlavina W."/>
            <person name="Kapustin Y."/>
            <person name="Meric P."/>
            <person name="Maglott D."/>
            <person name="Birtle Z."/>
            <person name="Marques A.C."/>
            <person name="Graves T."/>
            <person name="Zhou S."/>
            <person name="Teague B."/>
            <person name="Potamousis K."/>
            <person name="Churas C."/>
            <person name="Place M."/>
            <person name="Herschleb J."/>
            <person name="Runnheim R."/>
            <person name="Forrest D."/>
            <person name="Amos-Landgraf J."/>
            <person name="Schwartz D.C."/>
            <person name="Cheng Z."/>
            <person name="Lindblad-Toh K."/>
            <person name="Eichler E.E."/>
            <person name="Ponting C.P."/>
        </authorList>
    </citation>
    <scope>NUCLEOTIDE SEQUENCE [LARGE SCALE GENOMIC DNA]</scope>
    <source>
        <strain>C57BL/6J</strain>
    </source>
</reference>
<reference key="3">
    <citation type="journal article" date="2004" name="Genome Res.">
        <title>The status, quality, and expansion of the NIH full-length cDNA project: the Mammalian Gene Collection (MGC).</title>
        <authorList>
            <consortium name="The MGC Project Team"/>
        </authorList>
    </citation>
    <scope>NUCLEOTIDE SEQUENCE [LARGE SCALE MRNA]</scope>
    <source>
        <strain>C57BL/6J</strain>
        <strain>FVB/N</strain>
        <tissue>Brain</tissue>
        <tissue>Colon</tissue>
    </source>
</reference>
<reference key="4">
    <citation type="journal article" date="2010" name="Cell">
        <title>A tissue-specific atlas of mouse protein phosphorylation and expression.</title>
        <authorList>
            <person name="Huttlin E.L."/>
            <person name="Jedrychowski M.P."/>
            <person name="Elias J.E."/>
            <person name="Goswami T."/>
            <person name="Rad R."/>
            <person name="Beausoleil S.A."/>
            <person name="Villen J."/>
            <person name="Haas W."/>
            <person name="Sowa M.E."/>
            <person name="Gygi S.P."/>
        </authorList>
    </citation>
    <scope>IDENTIFICATION BY MASS SPECTROMETRY [LARGE SCALE ANALYSIS]</scope>
    <source>
        <tissue>Brain</tissue>
        <tissue>Brown adipose tissue</tissue>
        <tissue>Heart</tissue>
        <tissue>Kidney</tissue>
        <tissue>Liver</tissue>
        <tissue>Lung</tissue>
        <tissue>Pancreas</tissue>
        <tissue>Spleen</tissue>
        <tissue>Testis</tissue>
    </source>
</reference>
<reference key="5">
    <citation type="journal article" date="2020" name="Cell Rep.">
        <title>NACHO Engages N-Glycosylation ER Chaperone Pathways for alpha7 Nicotinic Receptor Assembly.</title>
        <authorList>
            <person name="Kweon H.J."/>
            <person name="Gu S."/>
            <person name="Witham E."/>
            <person name="Dhara M."/>
            <person name="Yu H."/>
            <person name="Mandon E.D."/>
            <person name="Jawhari A."/>
            <person name="Bredt D.S."/>
        </authorList>
    </citation>
    <scope>INTERACTION WITH TMEM35A/NACHO</scope>
</reference>
<organism>
    <name type="scientific">Mus musculus</name>
    <name type="common">Mouse</name>
    <dbReference type="NCBI Taxonomy" id="10090"/>
    <lineage>
        <taxon>Eukaryota</taxon>
        <taxon>Metazoa</taxon>
        <taxon>Chordata</taxon>
        <taxon>Craniata</taxon>
        <taxon>Vertebrata</taxon>
        <taxon>Euteleostomi</taxon>
        <taxon>Mammalia</taxon>
        <taxon>Eutheria</taxon>
        <taxon>Euarchontoglires</taxon>
        <taxon>Glires</taxon>
        <taxon>Rodentia</taxon>
        <taxon>Myomorpha</taxon>
        <taxon>Muroidea</taxon>
        <taxon>Muridae</taxon>
        <taxon>Murinae</taxon>
        <taxon>Mus</taxon>
        <taxon>Mus</taxon>
    </lineage>
</organism>
<evidence type="ECO:0000250" key="1"/>
<evidence type="ECO:0000250" key="2">
    <source>
        <dbReference type="UniProtKB" id="F1PCT7"/>
    </source>
</evidence>
<evidence type="ECO:0000250" key="3">
    <source>
        <dbReference type="UniProtKB" id="P04844"/>
    </source>
</evidence>
<evidence type="ECO:0000255" key="4"/>
<evidence type="ECO:0000269" key="5">
    <source>
    </source>
</evidence>
<evidence type="ECO:0000305" key="6"/>
<evidence type="ECO:0000312" key="7">
    <source>
        <dbReference type="MGI" id="MGI:98085"/>
    </source>
</evidence>
<feature type="signal peptide" evidence="1">
    <location>
        <begin position="1"/>
        <end position="22"/>
    </location>
</feature>
<feature type="chain" id="PRO_0000022248" description="Dolichyl-diphosphooligosaccharide--protein glycosyltransferase subunit 2">
    <location>
        <begin position="23"/>
        <end position="631"/>
    </location>
</feature>
<feature type="topological domain" description="Lumenal" evidence="4">
    <location>
        <begin position="23"/>
        <end position="540"/>
    </location>
</feature>
<feature type="transmembrane region" description="Helical" evidence="4">
    <location>
        <begin position="541"/>
        <end position="561"/>
    </location>
</feature>
<feature type="topological domain" description="Cytoplasmic" evidence="4">
    <location>
        <begin position="562"/>
        <end position="571"/>
    </location>
</feature>
<feature type="transmembrane region" description="Helical" evidence="4">
    <location>
        <begin position="572"/>
        <end position="592"/>
    </location>
</feature>
<feature type="topological domain" description="Lumenal" evidence="4">
    <location>
        <begin position="593"/>
        <end position="596"/>
    </location>
</feature>
<feature type="transmembrane region" description="Helical" evidence="4">
    <location>
        <begin position="597"/>
        <end position="617"/>
    </location>
</feature>
<feature type="topological domain" description="Cytoplasmic" evidence="4">
    <location>
        <begin position="618"/>
        <end position="631"/>
    </location>
</feature>
<feature type="glycosylation site" description="N-linked (GlcNAc...) asparagine" evidence="4">
    <location>
        <position position="106"/>
    </location>
</feature>
<feature type="cross-link" description="Glycyl lysine isopeptide (Lys-Gly) (interchain with G-Cter in ubiquitin)" evidence="3">
    <location>
        <position position="154"/>
    </location>
</feature>
<gene>
    <name evidence="7" type="primary">Rpn2</name>
</gene>
<accession>Q9DBG6</accession>
<accession>A2ACG6</accession>
<accession>Q3TKY0</accession>
<accession>Q91XH0</accession>
<name>RPN2_MOUSE</name>
<keyword id="KW-0002">3D-structure</keyword>
<keyword id="KW-0256">Endoplasmic reticulum</keyword>
<keyword id="KW-0325">Glycoprotein</keyword>
<keyword id="KW-1017">Isopeptide bond</keyword>
<keyword id="KW-0472">Membrane</keyword>
<keyword id="KW-1185">Reference proteome</keyword>
<keyword id="KW-0732">Signal</keyword>
<keyword id="KW-0812">Transmembrane</keyword>
<keyword id="KW-1133">Transmembrane helix</keyword>
<keyword id="KW-0832">Ubl conjugation</keyword>
<protein>
    <recommendedName>
        <fullName evidence="6">Dolichyl-diphosphooligosaccharide--protein glycosyltransferase subunit 2</fullName>
    </recommendedName>
    <alternativeName>
        <fullName>Dolichyl-diphosphooligosaccharide--protein glycosyltransferase 63 kDa subunit</fullName>
    </alternativeName>
    <alternativeName>
        <fullName>Ribophorin II</fullName>
        <shortName>RPN-II</shortName>
    </alternativeName>
    <alternativeName>
        <fullName>Ribophorin-2</fullName>
    </alternativeName>
</protein>
<comment type="function">
    <text evidence="2">Subunit of the oligosaccharyl transferase (OST) complex that catalyzes the initial transfer of a defined glycan (Glc(3)Man(9)GlcNAc(2) in eukaryotes) from the lipid carrier dolichol-pyrophosphate to an asparagine residue within an Asn-X-Ser/Thr consensus motif in nascent polypeptide chains, the first step in protein N-glycosylation. N-glycosylation occurs cotranslationally and the complex associates with the Sec61 complex at the channel-forming translocon complex that mediates protein translocation across the endoplasmic reticulum (ER). All subunits are required for a maximal enzyme activity.</text>
</comment>
<comment type="pathway">
    <text evidence="3">Protein modification; protein glycosylation.</text>
</comment>
<comment type="subunit">
    <text evidence="2 3 5">Component of the oligosaccharyltransferase (OST) complex (By similarity). OST exists in two different complex forms which contain common core subunits RPN1, RPN2, OST48, OST4, DAD1 and TMEM258, either STT3A or STT3B as catalytic subunits, and form-specific accessory subunits (By similarity). STT3A complex assembly occurs through the formation of 3 subcomplexes. Subcomplex 1 contains RPN1 and TMEM258, subcomplex 2 contains the STT3A-specific subunits STT3A, DC2/OSTC, and KCP2 as well as the core subunit OST4, and subcomplex 3 contains RPN2, DAD1, and OST48. The STT3A complex can form stable complexes with the Sec61 complex or with both the Sec61 and TRAP complexes. Interacts with DDI2 (By similarity). Interacts with TMEM35A/NACHO (PubMed:32783947).</text>
</comment>
<comment type="subcellular location">
    <subcellularLocation>
        <location evidence="2">Endoplasmic reticulum</location>
    </subcellularLocation>
    <subcellularLocation>
        <location>Endoplasmic reticulum membrane</location>
        <topology evidence="6">Multi-pass membrane protein</topology>
    </subcellularLocation>
</comment>
<comment type="similarity">
    <text evidence="6">Belongs to the SWP1 family.</text>
</comment>
<proteinExistence type="evidence at protein level"/>